<reference key="1">
    <citation type="journal article" date="2005" name="Arch. Microbiol.">
        <title>The genome sequence of an anaerobic aromatic-degrading denitrifying bacterium, strain EbN1.</title>
        <authorList>
            <person name="Rabus R."/>
            <person name="Kube M."/>
            <person name="Heider J."/>
            <person name="Beck A."/>
            <person name="Heitmann K."/>
            <person name="Widdel F."/>
            <person name="Reinhardt R."/>
        </authorList>
    </citation>
    <scope>NUCLEOTIDE SEQUENCE [LARGE SCALE GENOMIC DNA]</scope>
    <source>
        <strain>DSM 19018 / LMG 30748 / EbN1</strain>
    </source>
</reference>
<accession>Q5P260</accession>
<gene>
    <name evidence="1" type="primary">plsY</name>
    <name type="ordered locus">AZOSEA24790</name>
    <name type="ORF">ebA4373</name>
</gene>
<proteinExistence type="inferred from homology"/>
<sequence length="197" mass="20013">MNFLLLLLAAYALGSTPFAIVSSRLFGLADPRRYGSGNPGATNVLRSGNKAAALLTLVGDCAKGWLAVWGAAKLGFSPVEAALAGLAAFLGHVFSVFLRFRGGKGVATALGVLAGINAWVALSALFVWLAVAVLTRYSSAAALAAAVITPISGAVLLGATPTVAVLALIAGILVWRHAPNIRKLMNGSESKIGASKS</sequence>
<keyword id="KW-0997">Cell inner membrane</keyword>
<keyword id="KW-1003">Cell membrane</keyword>
<keyword id="KW-0444">Lipid biosynthesis</keyword>
<keyword id="KW-0443">Lipid metabolism</keyword>
<keyword id="KW-0472">Membrane</keyword>
<keyword id="KW-0594">Phospholipid biosynthesis</keyword>
<keyword id="KW-1208">Phospholipid metabolism</keyword>
<keyword id="KW-1185">Reference proteome</keyword>
<keyword id="KW-0808">Transferase</keyword>
<keyword id="KW-0812">Transmembrane</keyword>
<keyword id="KW-1133">Transmembrane helix</keyword>
<name>PLSY_AROAE</name>
<comment type="function">
    <text evidence="1">Catalyzes the transfer of an acyl group from acyl-phosphate (acyl-PO(4)) to glycerol-3-phosphate (G3P) to form lysophosphatidic acid (LPA). This enzyme utilizes acyl-phosphate as fatty acyl donor, but not acyl-CoA or acyl-ACP.</text>
</comment>
<comment type="catalytic activity">
    <reaction evidence="1">
        <text>an acyl phosphate + sn-glycerol 3-phosphate = a 1-acyl-sn-glycero-3-phosphate + phosphate</text>
        <dbReference type="Rhea" id="RHEA:34075"/>
        <dbReference type="ChEBI" id="CHEBI:43474"/>
        <dbReference type="ChEBI" id="CHEBI:57597"/>
        <dbReference type="ChEBI" id="CHEBI:57970"/>
        <dbReference type="ChEBI" id="CHEBI:59918"/>
        <dbReference type="EC" id="2.3.1.275"/>
    </reaction>
</comment>
<comment type="pathway">
    <text evidence="1">Lipid metabolism; phospholipid metabolism.</text>
</comment>
<comment type="subunit">
    <text evidence="1">Probably interacts with PlsX.</text>
</comment>
<comment type="subcellular location">
    <subcellularLocation>
        <location evidence="1">Cell inner membrane</location>
        <topology evidence="1">Multi-pass membrane protein</topology>
    </subcellularLocation>
</comment>
<comment type="similarity">
    <text evidence="1">Belongs to the PlsY family.</text>
</comment>
<evidence type="ECO:0000255" key="1">
    <source>
        <dbReference type="HAMAP-Rule" id="MF_01043"/>
    </source>
</evidence>
<dbReference type="EC" id="2.3.1.275" evidence="1"/>
<dbReference type="EMBL" id="CR555306">
    <property type="protein sequence ID" value="CAI08604.1"/>
    <property type="molecule type" value="Genomic_DNA"/>
</dbReference>
<dbReference type="RefSeq" id="WP_011238290.1">
    <property type="nucleotide sequence ID" value="NC_006513.1"/>
</dbReference>
<dbReference type="SMR" id="Q5P260"/>
<dbReference type="STRING" id="76114.ebA4373"/>
<dbReference type="KEGG" id="eba:ebA4373"/>
<dbReference type="eggNOG" id="COG0344">
    <property type="taxonomic scope" value="Bacteria"/>
</dbReference>
<dbReference type="HOGENOM" id="CLU_081254_0_0_4"/>
<dbReference type="OrthoDB" id="9777124at2"/>
<dbReference type="UniPathway" id="UPA00085"/>
<dbReference type="Proteomes" id="UP000006552">
    <property type="component" value="Chromosome"/>
</dbReference>
<dbReference type="GO" id="GO:0005886">
    <property type="term" value="C:plasma membrane"/>
    <property type="evidence" value="ECO:0007669"/>
    <property type="project" value="UniProtKB-SubCell"/>
</dbReference>
<dbReference type="GO" id="GO:0043772">
    <property type="term" value="F:acyl-phosphate glycerol-3-phosphate acyltransferase activity"/>
    <property type="evidence" value="ECO:0007669"/>
    <property type="project" value="UniProtKB-UniRule"/>
</dbReference>
<dbReference type="GO" id="GO:0008654">
    <property type="term" value="P:phospholipid biosynthetic process"/>
    <property type="evidence" value="ECO:0007669"/>
    <property type="project" value="UniProtKB-UniRule"/>
</dbReference>
<dbReference type="HAMAP" id="MF_01043">
    <property type="entry name" value="PlsY"/>
    <property type="match status" value="1"/>
</dbReference>
<dbReference type="InterPro" id="IPR003811">
    <property type="entry name" value="G3P_acylTferase_PlsY"/>
</dbReference>
<dbReference type="NCBIfam" id="TIGR00023">
    <property type="entry name" value="glycerol-3-phosphate 1-O-acyltransferase PlsY"/>
    <property type="match status" value="1"/>
</dbReference>
<dbReference type="PANTHER" id="PTHR30309:SF0">
    <property type="entry name" value="GLYCEROL-3-PHOSPHATE ACYLTRANSFERASE-RELATED"/>
    <property type="match status" value="1"/>
</dbReference>
<dbReference type="PANTHER" id="PTHR30309">
    <property type="entry name" value="INNER MEMBRANE PROTEIN YGIH"/>
    <property type="match status" value="1"/>
</dbReference>
<dbReference type="Pfam" id="PF02660">
    <property type="entry name" value="G3P_acyltransf"/>
    <property type="match status" value="1"/>
</dbReference>
<dbReference type="SMART" id="SM01207">
    <property type="entry name" value="G3P_acyltransf"/>
    <property type="match status" value="1"/>
</dbReference>
<organism>
    <name type="scientific">Aromatoleum aromaticum (strain DSM 19018 / LMG 30748 / EbN1)</name>
    <name type="common">Azoarcus sp. (strain EbN1)</name>
    <dbReference type="NCBI Taxonomy" id="76114"/>
    <lineage>
        <taxon>Bacteria</taxon>
        <taxon>Pseudomonadati</taxon>
        <taxon>Pseudomonadota</taxon>
        <taxon>Betaproteobacteria</taxon>
        <taxon>Rhodocyclales</taxon>
        <taxon>Rhodocyclaceae</taxon>
        <taxon>Aromatoleum</taxon>
    </lineage>
</organism>
<protein>
    <recommendedName>
        <fullName evidence="1">Glycerol-3-phosphate acyltransferase</fullName>
    </recommendedName>
    <alternativeName>
        <fullName evidence="1">Acyl-PO4 G3P acyltransferase</fullName>
    </alternativeName>
    <alternativeName>
        <fullName evidence="1">Acyl-phosphate--glycerol-3-phosphate acyltransferase</fullName>
    </alternativeName>
    <alternativeName>
        <fullName evidence="1">G3P acyltransferase</fullName>
        <shortName evidence="1">GPAT</shortName>
        <ecNumber evidence="1">2.3.1.275</ecNumber>
    </alternativeName>
    <alternativeName>
        <fullName evidence="1">Lysophosphatidic acid synthase</fullName>
        <shortName evidence="1">LPA synthase</shortName>
    </alternativeName>
</protein>
<feature type="chain" id="PRO_0000188313" description="Glycerol-3-phosphate acyltransferase">
    <location>
        <begin position="1"/>
        <end position="197"/>
    </location>
</feature>
<feature type="transmembrane region" description="Helical" evidence="1">
    <location>
        <begin position="1"/>
        <end position="21"/>
    </location>
</feature>
<feature type="transmembrane region" description="Helical" evidence="1">
    <location>
        <begin position="78"/>
        <end position="98"/>
    </location>
</feature>
<feature type="transmembrane region" description="Helical" evidence="1">
    <location>
        <begin position="112"/>
        <end position="132"/>
    </location>
</feature>
<feature type="transmembrane region" description="Helical" evidence="1">
    <location>
        <begin position="155"/>
        <end position="175"/>
    </location>
</feature>